<name>TAT_HV1S1</name>
<evidence type="ECO:0000255" key="1">
    <source>
        <dbReference type="HAMAP-Rule" id="MF_04079"/>
    </source>
</evidence>
<evidence type="ECO:0000256" key="2">
    <source>
        <dbReference type="SAM" id="MobiDB-lite"/>
    </source>
</evidence>
<evidence type="ECO:0000305" key="3"/>
<dbReference type="EMBL" id="M65024">
    <property type="protein sequence ID" value="AAA45069.1"/>
    <property type="molecule type" value="Genomic_RNA"/>
</dbReference>
<dbReference type="SMR" id="P19553"/>
<dbReference type="GO" id="GO:0005576">
    <property type="term" value="C:extracellular region"/>
    <property type="evidence" value="ECO:0007669"/>
    <property type="project" value="UniProtKB-SubCell"/>
</dbReference>
<dbReference type="GO" id="GO:0030430">
    <property type="term" value="C:host cell cytoplasm"/>
    <property type="evidence" value="ECO:0007669"/>
    <property type="project" value="UniProtKB-SubCell"/>
</dbReference>
<dbReference type="GO" id="GO:0044196">
    <property type="term" value="C:host cell nucleolus"/>
    <property type="evidence" value="ECO:0007669"/>
    <property type="project" value="UniProtKB-SubCell"/>
</dbReference>
<dbReference type="GO" id="GO:0042805">
    <property type="term" value="F:actinin binding"/>
    <property type="evidence" value="ECO:0007669"/>
    <property type="project" value="UniProtKB-UniRule"/>
</dbReference>
<dbReference type="GO" id="GO:0030332">
    <property type="term" value="F:cyclin binding"/>
    <property type="evidence" value="ECO:0007669"/>
    <property type="project" value="UniProtKB-UniRule"/>
</dbReference>
<dbReference type="GO" id="GO:0046872">
    <property type="term" value="F:metal ion binding"/>
    <property type="evidence" value="ECO:0007669"/>
    <property type="project" value="UniProtKB-UniRule"/>
</dbReference>
<dbReference type="GO" id="GO:0019904">
    <property type="term" value="F:protein domain specific binding"/>
    <property type="evidence" value="ECO:0007669"/>
    <property type="project" value="UniProtKB-UniRule"/>
</dbReference>
<dbReference type="GO" id="GO:0004865">
    <property type="term" value="F:protein serine/threonine phosphatase inhibitor activity"/>
    <property type="evidence" value="ECO:0007669"/>
    <property type="project" value="UniProtKB-KW"/>
</dbReference>
<dbReference type="GO" id="GO:0001070">
    <property type="term" value="F:RNA-binding transcription regulator activity"/>
    <property type="evidence" value="ECO:0007669"/>
    <property type="project" value="UniProtKB-UniRule"/>
</dbReference>
<dbReference type="GO" id="GO:1990970">
    <property type="term" value="F:trans-activation response element binding"/>
    <property type="evidence" value="ECO:0007669"/>
    <property type="project" value="UniProtKB-UniRule"/>
</dbReference>
<dbReference type="GO" id="GO:0006351">
    <property type="term" value="P:DNA-templated transcription"/>
    <property type="evidence" value="ECO:0007669"/>
    <property type="project" value="UniProtKB-UniRule"/>
</dbReference>
<dbReference type="GO" id="GO:0032968">
    <property type="term" value="P:positive regulation of transcription elongation by RNA polymerase II"/>
    <property type="evidence" value="ECO:0007669"/>
    <property type="project" value="UniProtKB-UniRule"/>
</dbReference>
<dbReference type="GO" id="GO:0050434">
    <property type="term" value="P:positive regulation of viral transcription"/>
    <property type="evidence" value="ECO:0007669"/>
    <property type="project" value="UniProtKB-UniRule"/>
</dbReference>
<dbReference type="GO" id="GO:0039525">
    <property type="term" value="P:symbiont-mediated perturbation of host chromatin organization"/>
    <property type="evidence" value="ECO:0007669"/>
    <property type="project" value="UniProtKB-UniRule"/>
</dbReference>
<dbReference type="GO" id="GO:0052170">
    <property type="term" value="P:symbiont-mediated suppression of host innate immune response"/>
    <property type="evidence" value="ECO:0007669"/>
    <property type="project" value="UniProtKB-KW"/>
</dbReference>
<dbReference type="GO" id="GO:0039606">
    <property type="term" value="P:symbiont-mediated suppression of host translation initiation"/>
    <property type="evidence" value="ECO:0007669"/>
    <property type="project" value="UniProtKB-KW"/>
</dbReference>
<dbReference type="GO" id="GO:0039502">
    <property type="term" value="P:symbiont-mediated suppression of host type I interferon-mediated signaling pathway"/>
    <property type="evidence" value="ECO:0007669"/>
    <property type="project" value="UniProtKB-UniRule"/>
</dbReference>
<dbReference type="Gene3D" id="4.10.20.10">
    <property type="entry name" value="Tat domain"/>
    <property type="match status" value="1"/>
</dbReference>
<dbReference type="HAMAP" id="MF_04079">
    <property type="entry name" value="HIV_TAT"/>
    <property type="match status" value="1"/>
</dbReference>
<dbReference type="InterPro" id="IPR001831">
    <property type="entry name" value="IV_Tat"/>
</dbReference>
<dbReference type="InterPro" id="IPR036963">
    <property type="entry name" value="Tat_dom_sf"/>
</dbReference>
<dbReference type="Pfam" id="PF00539">
    <property type="entry name" value="Tat"/>
    <property type="match status" value="1"/>
</dbReference>
<dbReference type="PRINTS" id="PR00055">
    <property type="entry name" value="HIVTATDOMAIN"/>
</dbReference>
<feature type="chain" id="PRO_0000085351" description="Protein Tat">
    <location>
        <begin position="1"/>
        <end position="101"/>
    </location>
</feature>
<feature type="region of interest" description="Transactivation" evidence="1">
    <location>
        <begin position="1"/>
        <end position="48"/>
    </location>
</feature>
<feature type="region of interest" description="Interaction with human CREBBP" evidence="1">
    <location>
        <begin position="1"/>
        <end position="24"/>
    </location>
</feature>
<feature type="region of interest" description="Cysteine-rich" evidence="1">
    <location>
        <begin position="22"/>
        <end position="37"/>
    </location>
</feature>
<feature type="region of interest" description="Core" evidence="1">
    <location>
        <begin position="38"/>
        <end position="48"/>
    </location>
</feature>
<feature type="region of interest" description="Disordered" evidence="2">
    <location>
        <begin position="48"/>
        <end position="101"/>
    </location>
</feature>
<feature type="region of interest" description="Interaction with the host capping enzyme RNGTT" evidence="1">
    <location>
        <begin position="49"/>
        <end position="86"/>
    </location>
</feature>
<feature type="short sequence motif" description="Nuclear localization signal, RNA-binding (TAR), and protein transduction" evidence="1">
    <location>
        <begin position="49"/>
        <end position="57"/>
    </location>
</feature>
<feature type="compositionally biased region" description="Basic residues" evidence="2">
    <location>
        <begin position="48"/>
        <end position="57"/>
    </location>
</feature>
<feature type="compositionally biased region" description="Basic and acidic residues" evidence="2">
    <location>
        <begin position="83"/>
        <end position="101"/>
    </location>
</feature>
<feature type="binding site" evidence="1">
    <location>
        <position position="22"/>
    </location>
    <ligand>
        <name>Zn(2+)</name>
        <dbReference type="ChEBI" id="CHEBI:29105"/>
        <label>1</label>
    </ligand>
</feature>
<feature type="binding site" evidence="1">
    <location>
        <position position="25"/>
    </location>
    <ligand>
        <name>Zn(2+)</name>
        <dbReference type="ChEBI" id="CHEBI:29105"/>
        <label>2</label>
    </ligand>
</feature>
<feature type="binding site" evidence="1">
    <location>
        <position position="27"/>
    </location>
    <ligand>
        <name>Zn(2+)</name>
        <dbReference type="ChEBI" id="CHEBI:29105"/>
        <label>2</label>
    </ligand>
</feature>
<feature type="binding site" evidence="1">
    <location>
        <position position="30"/>
    </location>
    <ligand>
        <name>Zn(2+)</name>
        <dbReference type="ChEBI" id="CHEBI:29105"/>
        <label>2</label>
    </ligand>
</feature>
<feature type="binding site" evidence="1">
    <location>
        <position position="33"/>
    </location>
    <ligand>
        <name>Zn(2+)</name>
        <dbReference type="ChEBI" id="CHEBI:29105"/>
        <label>1</label>
    </ligand>
</feature>
<feature type="binding site" evidence="1">
    <location>
        <position position="34"/>
    </location>
    <ligand>
        <name>Zn(2+)</name>
        <dbReference type="ChEBI" id="CHEBI:29105"/>
        <label>1</label>
    </ligand>
</feature>
<feature type="binding site" evidence="1">
    <location>
        <position position="37"/>
    </location>
    <ligand>
        <name>Zn(2+)</name>
        <dbReference type="ChEBI" id="CHEBI:29105"/>
        <label>1</label>
    </ligand>
</feature>
<feature type="site" description="Essential for Tat translocation through the endosomal membrane" evidence="1">
    <location>
        <position position="11"/>
    </location>
</feature>
<feature type="modified residue" description="N6-acetyllysine; by host PCAF" evidence="1">
    <location>
        <position position="28"/>
    </location>
</feature>
<feature type="modified residue" description="N6-acetyllysine; by host EP300 and GCN5L2" evidence="1">
    <location>
        <position position="50"/>
    </location>
</feature>
<feature type="modified residue" description="N6-acetyllysine; by host EP300 and GCN5L2" evidence="1">
    <location>
        <position position="51"/>
    </location>
</feature>
<feature type="modified residue" description="Asymmetric dimethylarginine; by host PRMT6" evidence="1">
    <location>
        <position position="52"/>
    </location>
</feature>
<feature type="modified residue" description="Asymmetric dimethylarginine; by host PRMT6" evidence="1">
    <location>
        <position position="53"/>
    </location>
</feature>
<feature type="cross-link" description="Glycyl lysine isopeptide (Lys-Gly) (interchain with G-Cter in ubiquitin)" evidence="1">
    <location>
        <position position="71"/>
    </location>
</feature>
<feature type="splice variant" id="VSP_022427" description="In isoform Short.">
    <location>
        <begin position="73"/>
        <end position="101"/>
    </location>
</feature>
<organism>
    <name type="scientific">Human immunodeficiency virus type 1 group M subtype B (isolate SF162)</name>
    <name type="common">HIV-1</name>
    <dbReference type="NCBI Taxonomy" id="11691"/>
    <lineage>
        <taxon>Viruses</taxon>
        <taxon>Riboviria</taxon>
        <taxon>Pararnavirae</taxon>
        <taxon>Artverviricota</taxon>
        <taxon>Revtraviricetes</taxon>
        <taxon>Ortervirales</taxon>
        <taxon>Retroviridae</taxon>
        <taxon>Orthoretrovirinae</taxon>
        <taxon>Lentivirus</taxon>
        <taxon>Human immunodeficiency virus type 1</taxon>
    </lineage>
</organism>
<sequence>MEPVDPRLEPWKHPGSQPKTACTNCYCKKCCFHCQVCFITKGLGISYGRKKRRQRRRAPPDSEVHQVSLPKQPASQPQGDPTGPKESKKKVERETETDPVH</sequence>
<proteinExistence type="inferred from homology"/>
<accession>P19553</accession>
<protein>
    <recommendedName>
        <fullName evidence="1">Protein Tat</fullName>
    </recommendedName>
    <alternativeName>
        <fullName evidence="1">Transactivating regulatory protein</fullName>
    </alternativeName>
</protein>
<keyword id="KW-0007">Acetylation</keyword>
<keyword id="KW-0010">Activator</keyword>
<keyword id="KW-0014">AIDS</keyword>
<keyword id="KW-0025">Alternative splicing</keyword>
<keyword id="KW-0053">Apoptosis</keyword>
<keyword id="KW-1035">Host cytoplasm</keyword>
<keyword id="KW-1048">Host nucleus</keyword>
<keyword id="KW-0945">Host-virus interaction</keyword>
<keyword id="KW-1090">Inhibition of host innate immune response by virus</keyword>
<keyword id="KW-1114">Inhibition of host interferon signaling pathway by virus</keyword>
<keyword id="KW-0922">Interferon antiviral system evasion</keyword>
<keyword id="KW-1017">Isopeptide bond</keyword>
<keyword id="KW-0479">Metal-binding</keyword>
<keyword id="KW-0488">Methylation</keyword>
<keyword id="KW-1122">Modulation of host chromatin by virus</keyword>
<keyword id="KW-1126">Modulation of host PP1 activity by virus</keyword>
<keyword id="KW-0597">Phosphoprotein</keyword>
<keyword id="KW-0694">RNA-binding</keyword>
<keyword id="KW-0964">Secreted</keyword>
<keyword id="KW-0804">Transcription</keyword>
<keyword id="KW-0805">Transcription regulation</keyword>
<keyword id="KW-0832">Ubl conjugation</keyword>
<keyword id="KW-0899">Viral immunoevasion</keyword>
<keyword id="KW-0862">Zinc</keyword>
<gene>
    <name evidence="1" type="primary">tat</name>
</gene>
<reference key="1">
    <citation type="journal article" date="1990" name="J. Virol.">
        <title>Viral determinants of human immunodeficiency virus type 1 T-cell or macrophage tropism, cytopathogenicity, and CD4 antigen modulation.</title>
        <authorList>
            <person name="Cheng-Mayer C."/>
            <person name="Quiroga M."/>
            <person name="Tung J.W."/>
            <person name="Dina D."/>
            <person name="Levy J.A."/>
        </authorList>
    </citation>
    <scope>NUCLEOTIDE SEQUENCE [GENOMIC RNA]</scope>
</reference>
<reference key="2">
    <citation type="journal article" date="2005" name="Microbes Infect.">
        <title>Decoding Tat: the biology of HIV Tat posttranslational modifications.</title>
        <authorList>
            <person name="Hetzer C."/>
            <person name="Dormeyer W."/>
            <person name="Schnolzer M."/>
            <person name="Ott M."/>
        </authorList>
    </citation>
    <scope>REVIEW</scope>
    <scope>ALTERNATIVE SPLICING</scope>
</reference>
<reference key="3">
    <citation type="journal article" date="2006" name="Front. Biosci.">
        <title>The multiple functions of HIV-1 Tat: proliferation versus apoptosis.</title>
        <authorList>
            <person name="Peruzzi F."/>
        </authorList>
    </citation>
    <scope>REVIEW</scope>
</reference>
<reference key="4">
    <citation type="journal article" date="2006" name="Microbes Infect.">
        <title>HIV tat and neurotoxicity.</title>
        <authorList>
            <person name="King J.E."/>
            <person name="Eugenin E.A."/>
            <person name="Buckner C.M."/>
            <person name="Berman J.W."/>
        </authorList>
    </citation>
    <scope>REVIEW</scope>
</reference>
<organismHost>
    <name type="scientific">Homo sapiens</name>
    <name type="common">Human</name>
    <dbReference type="NCBI Taxonomy" id="9606"/>
</organismHost>
<comment type="function">
    <text evidence="1">Transcriptional activator that increases RNA Pol II processivity, thereby increasing the level of full-length viral transcripts. Recognizes a hairpin structure at the 5'-LTR of the nascent viral mRNAs referred to as the transactivation responsive RNA element (TAR) and recruits the cyclin T1-CDK9 complex (P-TEFb complex) that will in turn hyperphosphorylate the RNA polymerase II to allow efficient elongation. The CDK9 component of P-TEFb and other Tat-activated kinases hyperphosphorylate the C-terminus of RNA Pol II that becomes stabilized and much more processive. Other factors such as HTATSF1/Tat-SF1, SUPT5H/SPT5, and HTATIP2 are also important for Tat's function. Besides its effect on RNA Pol II processivity, Tat induces chromatin remodeling of proviral genes by recruiting the histone acetyltransferases (HATs) CREBBP, EP300 and PCAF to the chromatin. This also contributes to the increase in proviral transcription rate, especially when the provirus integrates in transcriptionally silent region of the host genome. To ensure maximal activation of the LTR, Tat mediates nuclear translocation of NF-kappa-B by interacting with host RELA. Through its interaction with host TBP, Tat may also modulate transcription initiation. Tat can reactivate a latently infected cell by penetrating in it and transactivating its LTR promoter. In the cytoplasm, Tat is thought to act as a translational activator of HIV-1 mRNAs.</text>
</comment>
<comment type="function">
    <text evidence="1">Extracellular circulating Tat can be endocytosed by surrounding uninfected cells via the binding to several surface receptors such as CD26, CXCR4, heparan sulfate proteoglycans (HSPG) or LDLR. Neurons are rarely infected, but they internalize Tat via their LDLR. Through its interaction with nuclear HATs, Tat is potentially able to control the acetylation-dependent cellular gene expression. Modulates the expression of many cellular genes involved in cell survival, proliferation or in coding for cytokines or cytokine receptors. Tat plays a role in T-cell and neurons apoptosis. Tat induced neurotoxicity and apoptosis probably contribute to neuroAIDS. Circulating Tat also acts as a chemokine-like and/or growth factor-like molecule that binds to specific receptors on the surface of the cells, affecting many cellular pathways. In the vascular system, Tat binds to ITGAV/ITGB3 and ITGA5/ITGB1 integrins dimers at the surface of endothelial cells and competes with bFGF for heparin-binding sites, leading to an excess of soluble bFGF.</text>
</comment>
<comment type="subunit">
    <text evidence="1">Interacts with host CCNT1. Associates with the P-TEFb complex composed at least of Tat, P-TEFb (CDK9 and CCNT1), TAR RNA, RNA Pol II. Recruits the HATs CREBBP, TAF1/TFIID, EP300, PCAF and GCN5L2. Interacts with host KAT5/Tip60; this interaction targets the latter to degradation. Interacts with the host deacetylase SIRT1. Interacts with host capping enzyme RNGTT; this interaction stimulates RNGTT. Binds to host KDR, and to the host integrins ITGAV/ITGB3 and ITGA5/ITGB1. Interacts with host KPNB1/importin beta-1 without previous binding to KPNA1/importin alpha-1. Interacts with EIF2AK2. Interacts with host nucleosome assembly protein NAP1L1; this interaction may be required for the transport of Tat within the nucleus, since the two proteins interact at the nuclear rim. Interacts with host C1QBP/SF2P32; this interaction involves lysine-acetylated Tat. Interacts with the host chemokine receptors CCR2, CCR3 and CXCR4. Interacts with host DPP4/CD26; this interaction may trigger an anti-proliferative effect. Interacts with host LDLR. Interacts with the host extracellular matrix metalloproteinase MMP1. Interacts with host PRMT6; this interaction mediates Tat's methylation. Interacts with, and is ubiquitinated by MDM2/Hdm2. Interacts with host PSMC3 and HTATIP2. Interacts with STAB1; this interaction may overcome SATB1-mediated repression of IL2 and IL2RA (interleukin) in T cells by binding to the same domain than HDAC1. Interacts (when acetylated) with human CDK13, thereby increasing HIV-1 mRNA splicing and promoting the production of the doubly spliced HIV-1 protein Nef. Interacts with host TBP; this interaction modulates the activity of transcriptional pre-initiation complex. Interacts with host RELA. Interacts with host PLSCR1; this interaction negatively regulates Tat transactivation activity by altering its subcellular distribution.</text>
</comment>
<comment type="subcellular location">
    <subcellularLocation>
        <location evidence="1">Host nucleus</location>
        <location evidence="1">Host nucleolus</location>
    </subcellularLocation>
    <subcellularLocation>
        <location evidence="1">Host cytoplasm</location>
    </subcellularLocation>
    <subcellularLocation>
        <location evidence="1">Secreted</location>
    </subcellularLocation>
    <text evidence="1">Probably localizes to both nuclear and nucleolar compartments. Nuclear localization is mediated through the interaction of the nuclear localization signal with importin KPNB1. Secretion occurs through a Golgi-independent pathway. Tat is released from infected cells to the extracellular space where it remains associated to the cell membrane, or is secreted into the cerebrospinal fluid and sera. Extracellular Tat can be endocytosed by surrounding uninfected cells via binding to several receptors depending on the cell type.</text>
</comment>
<comment type="alternative products">
    <event type="alternative splicing"/>
    <isoform>
        <id>P19553-1</id>
        <name>Long</name>
        <sequence type="displayed"/>
    </isoform>
    <isoform>
        <id>P19553-2</id>
        <name>Short</name>
        <sequence type="described" ref="VSP_022427"/>
    </isoform>
</comment>
<comment type="domain">
    <text evidence="1">The cell attachment site mediates the interaction with ITGAV/ITGB3 and ITGA5/ITGB1 integrins, leading to vascular cell migration and invasion. This interaction also provides endothelial cells with the adhesion signal they require to grow in response to mitogens.</text>
</comment>
<comment type="domain">
    <text evidence="1">The Cys-rich region may bind 2 zinc ions. This region is involved in binding to KAT5.</text>
</comment>
<comment type="domain">
    <text evidence="1">The transactivation domain mediates the interaction with CCNT1, GCN5L2, and MDM2.</text>
</comment>
<comment type="domain">
    <text evidence="1">The Arg-rich RNA-binding region binds the TAR RNA. This region also mediates the nuclear localization through direct binding to KPNB1 and is involved in Tat's transfer across cell membranes (protein transduction). The same region is required for the interaction with EP300, PCAF, EIF2AK2 and KDR.</text>
</comment>
<comment type="PTM">
    <text evidence="1">Asymmetrical arginine methylation by host PRMT6 seems to diminish the transactivation capacity of Tat and affects the interaction with host CCNT1.</text>
</comment>
<comment type="PTM">
    <text evidence="1">Acetylation by EP300, CREBBP, GCN5L2/GCN5 and PCAF regulates the transactivation activity of Tat. EP300-mediated acetylation of Lys-50 promotes dissociation of Tat from the TAR RNA through the competitive binding to PCAF's bromodomain. In addition, the non-acetylated Tat's N-terminus can also interact with PCAF. PCAF-mediated acetylation of Lys-28 enhances Tat's binding to CCNT1. Lys-50 is deacetylated by SIRT1.</text>
</comment>
<comment type="PTM">
    <text evidence="1">Polyubiquitination by host MDM2 does not target Tat to degradation, but activates its transactivation function and fosters interaction with CCNT1 and TAR RNA.</text>
</comment>
<comment type="PTM">
    <text evidence="1">Phosphorylated by EIF2AK2 on serine and threonine residues adjacent to the basic region important for TAR RNA binding and function. Phosphorylation of Tat by EIF2AK2 is dependent on the prior activation of EIF2AK2 by dsRNA.</text>
</comment>
<comment type="miscellaneous">
    <text evidence="1">HIV-1 lineages are divided in three main groups, M (for Major), O (for Outlier), and N (for New, or Non-M, Non-O). The vast majority of strains found worldwide belong to the group M. Group O seems to be endemic to and largely confined to Cameroon and neighboring countries in West Central Africa, where these viruses represent a small minority of HIV-1 strains. The group N is represented by a limited number of isolates from Cameroonian persons. The group M is further subdivided in 9 clades or subtypes (A to D, F to H, J and K).</text>
</comment>
<comment type="miscellaneous">
    <molecule>Isoform Short</molecule>
    <text evidence="3">Expressed in the late stage of the infection cycle, when unspliced viral RNAs are exported to the cytoplasm by the viral Rev protein.</text>
</comment>
<comment type="similarity">
    <text evidence="1">Belongs to the lentiviruses Tat family.</text>
</comment>